<keyword id="KW-0963">Cytoplasm</keyword>
<keyword id="KW-0460">Magnesium</keyword>
<keyword id="KW-0479">Metal-binding</keyword>
<keyword id="KW-0566">Pantothenate biosynthesis</keyword>
<keyword id="KW-1185">Reference proteome</keyword>
<keyword id="KW-0808">Transferase</keyword>
<gene>
    <name evidence="1" type="primary">panB</name>
    <name type="ordered locus">GDI3788</name>
    <name type="ordered locus">Gdia_2663</name>
</gene>
<comment type="function">
    <text evidence="1">Catalyzes the reversible reaction in which hydroxymethyl group from 5,10-methylenetetrahydrofolate is transferred onto alpha-ketoisovalerate to form ketopantoate.</text>
</comment>
<comment type="catalytic activity">
    <reaction evidence="1">
        <text>3-methyl-2-oxobutanoate + (6R)-5,10-methylene-5,6,7,8-tetrahydrofolate + H2O = 2-dehydropantoate + (6S)-5,6,7,8-tetrahydrofolate</text>
        <dbReference type="Rhea" id="RHEA:11824"/>
        <dbReference type="ChEBI" id="CHEBI:11561"/>
        <dbReference type="ChEBI" id="CHEBI:11851"/>
        <dbReference type="ChEBI" id="CHEBI:15377"/>
        <dbReference type="ChEBI" id="CHEBI:15636"/>
        <dbReference type="ChEBI" id="CHEBI:57453"/>
        <dbReference type="EC" id="2.1.2.11"/>
    </reaction>
</comment>
<comment type="cofactor">
    <cofactor evidence="1">
        <name>Mg(2+)</name>
        <dbReference type="ChEBI" id="CHEBI:18420"/>
    </cofactor>
    <text evidence="1">Binds 1 Mg(2+) ion per subunit.</text>
</comment>
<comment type="pathway">
    <text evidence="1">Cofactor biosynthesis; (R)-pantothenate biosynthesis; (R)-pantoate from 3-methyl-2-oxobutanoate: step 1/2.</text>
</comment>
<comment type="subunit">
    <text evidence="1">Homodecamer; pentamer of dimers.</text>
</comment>
<comment type="subcellular location">
    <subcellularLocation>
        <location evidence="1">Cytoplasm</location>
    </subcellularLocation>
</comment>
<comment type="similarity">
    <text evidence="1">Belongs to the PanB family.</text>
</comment>
<accession>A9H9N2</accession>
<feature type="chain" id="PRO_1000096969" description="3-methyl-2-oxobutanoate hydroxymethyltransferase">
    <location>
        <begin position="1"/>
        <end position="276"/>
    </location>
</feature>
<feature type="region of interest" description="Disordered" evidence="2">
    <location>
        <begin position="256"/>
        <end position="276"/>
    </location>
</feature>
<feature type="active site" description="Proton acceptor" evidence="1">
    <location>
        <position position="180"/>
    </location>
</feature>
<feature type="binding site" evidence="1">
    <location>
        <begin position="44"/>
        <end position="45"/>
    </location>
    <ligand>
        <name>3-methyl-2-oxobutanoate</name>
        <dbReference type="ChEBI" id="CHEBI:11851"/>
    </ligand>
</feature>
<feature type="binding site" evidence="1">
    <location>
        <position position="44"/>
    </location>
    <ligand>
        <name>Mg(2+)</name>
        <dbReference type="ChEBI" id="CHEBI:18420"/>
    </ligand>
</feature>
<feature type="binding site" evidence="1">
    <location>
        <position position="83"/>
    </location>
    <ligand>
        <name>3-methyl-2-oxobutanoate</name>
        <dbReference type="ChEBI" id="CHEBI:11851"/>
    </ligand>
</feature>
<feature type="binding site" evidence="1">
    <location>
        <position position="83"/>
    </location>
    <ligand>
        <name>Mg(2+)</name>
        <dbReference type="ChEBI" id="CHEBI:18420"/>
    </ligand>
</feature>
<feature type="binding site" evidence="1">
    <location>
        <position position="112"/>
    </location>
    <ligand>
        <name>3-methyl-2-oxobutanoate</name>
        <dbReference type="ChEBI" id="CHEBI:11851"/>
    </ligand>
</feature>
<feature type="binding site" evidence="1">
    <location>
        <position position="114"/>
    </location>
    <ligand>
        <name>Mg(2+)</name>
        <dbReference type="ChEBI" id="CHEBI:18420"/>
    </ligand>
</feature>
<name>PANB_GLUDA</name>
<organism>
    <name type="scientific">Gluconacetobacter diazotrophicus (strain ATCC 49037 / DSM 5601 / CCUG 37298 / CIP 103539 / LMG 7603 / PAl5)</name>
    <dbReference type="NCBI Taxonomy" id="272568"/>
    <lineage>
        <taxon>Bacteria</taxon>
        <taxon>Pseudomonadati</taxon>
        <taxon>Pseudomonadota</taxon>
        <taxon>Alphaproteobacteria</taxon>
        <taxon>Acetobacterales</taxon>
        <taxon>Acetobacteraceae</taxon>
        <taxon>Gluconacetobacter</taxon>
    </lineage>
</organism>
<reference key="1">
    <citation type="journal article" date="2009" name="BMC Genomics">
        <title>Complete genome sequence of the sugarcane nitrogen-fixing endophyte Gluconacetobacter diazotrophicus Pal5.</title>
        <authorList>
            <person name="Bertalan M."/>
            <person name="Albano R."/>
            <person name="de Padua V."/>
            <person name="Rouws L."/>
            <person name="Rojas C."/>
            <person name="Hemerly A."/>
            <person name="Teixeira K."/>
            <person name="Schwab S."/>
            <person name="Araujo J."/>
            <person name="Oliveira A."/>
            <person name="Franca L."/>
            <person name="Magalhaes V."/>
            <person name="Alqueres S."/>
            <person name="Cardoso A."/>
            <person name="Almeida W."/>
            <person name="Loureiro M.M."/>
            <person name="Nogueira E."/>
            <person name="Cidade D."/>
            <person name="Oliveira D."/>
            <person name="Simao T."/>
            <person name="Macedo J."/>
            <person name="Valadao A."/>
            <person name="Dreschsel M."/>
            <person name="Freitas F."/>
            <person name="Vidal M."/>
            <person name="Guedes H."/>
            <person name="Rodrigues E."/>
            <person name="Meneses C."/>
            <person name="Brioso P."/>
            <person name="Pozzer L."/>
            <person name="Figueiredo D."/>
            <person name="Montano H."/>
            <person name="Junior J."/>
            <person name="de Souza Filho G."/>
            <person name="Martin Quintana Flores V."/>
            <person name="Ferreira B."/>
            <person name="Branco A."/>
            <person name="Gonzalez P."/>
            <person name="Guillobel H."/>
            <person name="Lemos M."/>
            <person name="Seibel L."/>
            <person name="Macedo J."/>
            <person name="Alves-Ferreira M."/>
            <person name="Sachetto-Martins G."/>
            <person name="Coelho A."/>
            <person name="Santos E."/>
            <person name="Amaral G."/>
            <person name="Neves A."/>
            <person name="Pacheco A.B."/>
            <person name="Carvalho D."/>
            <person name="Lery L."/>
            <person name="Bisch P."/>
            <person name="Rossle S.C."/>
            <person name="Urmenyi T."/>
            <person name="Rael Pereira A."/>
            <person name="Silva R."/>
            <person name="Rondinelli E."/>
            <person name="von Kruger W."/>
            <person name="Martins O."/>
            <person name="Baldani J.I."/>
            <person name="Ferreira P.C."/>
        </authorList>
    </citation>
    <scope>NUCLEOTIDE SEQUENCE [LARGE SCALE GENOMIC DNA]</scope>
    <source>
        <strain>ATCC 49037 / DSM 5601 / CCUG 37298 / CIP 103539 / LMG 7603 / PAl5</strain>
    </source>
</reference>
<reference key="2">
    <citation type="journal article" date="2010" name="Stand. Genomic Sci.">
        <title>Two genome sequences of the same bacterial strain, Gluconacetobacter diazotrophicus PAl 5, suggest a new standard in genome sequence submission.</title>
        <authorList>
            <person name="Giongo A."/>
            <person name="Tyler H.L."/>
            <person name="Zipperer U.N."/>
            <person name="Triplett E.W."/>
        </authorList>
    </citation>
    <scope>NUCLEOTIDE SEQUENCE [LARGE SCALE GENOMIC DNA]</scope>
    <source>
        <strain>ATCC 49037 / DSM 5601 / CCUG 37298 / CIP 103539 / LMG 7603 / PAl5</strain>
    </source>
</reference>
<evidence type="ECO:0000255" key="1">
    <source>
        <dbReference type="HAMAP-Rule" id="MF_00156"/>
    </source>
</evidence>
<evidence type="ECO:0000256" key="2">
    <source>
        <dbReference type="SAM" id="MobiDB-lite"/>
    </source>
</evidence>
<proteinExistence type="inferred from homology"/>
<sequence>MRITLFDVQAMKPAGQRIAMLTAYDHPSAVLAERAGVPMLLVGDSLGMAVHGFDTTLPVTLDDMIRHARAVVRGTSRALVVADLPFLTYATEADAIASARRVMQEAGVQALKLEGGATIAPTVRRLTELGVPVMGHLGLTPQSQHTLGLRVQARQAAEARRLLDDALALQDAGAFAIVLELVPTELAQAVTRRLQIPVIGIGAGAGCDGQVQVWHDILGLFPGKSPRHAKRFAEIGTAIEDALRAYVSEVQSGTFPTEAQSSRMKPDELSRALNAE</sequence>
<protein>
    <recommendedName>
        <fullName evidence="1">3-methyl-2-oxobutanoate hydroxymethyltransferase</fullName>
        <ecNumber evidence="1">2.1.2.11</ecNumber>
    </recommendedName>
    <alternativeName>
        <fullName evidence="1">Ketopantoate hydroxymethyltransferase</fullName>
        <shortName evidence="1">KPHMT</shortName>
    </alternativeName>
</protein>
<dbReference type="EC" id="2.1.2.11" evidence="1"/>
<dbReference type="EMBL" id="CP001189">
    <property type="protein sequence ID" value="ACI52402.1"/>
    <property type="molecule type" value="Genomic_DNA"/>
</dbReference>
<dbReference type="EMBL" id="AM889285">
    <property type="protein sequence ID" value="CAP57731.1"/>
    <property type="molecule type" value="Genomic_DNA"/>
</dbReference>
<dbReference type="RefSeq" id="WP_012228567.1">
    <property type="nucleotide sequence ID" value="NC_010125.1"/>
</dbReference>
<dbReference type="SMR" id="A9H9N2"/>
<dbReference type="STRING" id="272568.GDI3788"/>
<dbReference type="KEGG" id="gdi:GDI3788"/>
<dbReference type="KEGG" id="gdj:Gdia_2663"/>
<dbReference type="eggNOG" id="COG0413">
    <property type="taxonomic scope" value="Bacteria"/>
</dbReference>
<dbReference type="HOGENOM" id="CLU_036645_1_0_5"/>
<dbReference type="OrthoDB" id="9781789at2"/>
<dbReference type="UniPathway" id="UPA00028">
    <property type="reaction ID" value="UER00003"/>
</dbReference>
<dbReference type="Proteomes" id="UP000001176">
    <property type="component" value="Chromosome"/>
</dbReference>
<dbReference type="GO" id="GO:0005737">
    <property type="term" value="C:cytoplasm"/>
    <property type="evidence" value="ECO:0007669"/>
    <property type="project" value="UniProtKB-SubCell"/>
</dbReference>
<dbReference type="GO" id="GO:0003864">
    <property type="term" value="F:3-methyl-2-oxobutanoate hydroxymethyltransferase activity"/>
    <property type="evidence" value="ECO:0007669"/>
    <property type="project" value="UniProtKB-UniRule"/>
</dbReference>
<dbReference type="GO" id="GO:0000287">
    <property type="term" value="F:magnesium ion binding"/>
    <property type="evidence" value="ECO:0007669"/>
    <property type="project" value="TreeGrafter"/>
</dbReference>
<dbReference type="GO" id="GO:0015940">
    <property type="term" value="P:pantothenate biosynthetic process"/>
    <property type="evidence" value="ECO:0007669"/>
    <property type="project" value="UniProtKB-UniRule"/>
</dbReference>
<dbReference type="CDD" id="cd06557">
    <property type="entry name" value="KPHMT-like"/>
    <property type="match status" value="1"/>
</dbReference>
<dbReference type="FunFam" id="3.20.20.60:FF:000003">
    <property type="entry name" value="3-methyl-2-oxobutanoate hydroxymethyltransferase"/>
    <property type="match status" value="1"/>
</dbReference>
<dbReference type="Gene3D" id="3.20.20.60">
    <property type="entry name" value="Phosphoenolpyruvate-binding domains"/>
    <property type="match status" value="1"/>
</dbReference>
<dbReference type="HAMAP" id="MF_00156">
    <property type="entry name" value="PanB"/>
    <property type="match status" value="1"/>
</dbReference>
<dbReference type="InterPro" id="IPR003700">
    <property type="entry name" value="Pantoate_hydroxy_MeTrfase"/>
</dbReference>
<dbReference type="InterPro" id="IPR015813">
    <property type="entry name" value="Pyrv/PenolPyrv_kinase-like_dom"/>
</dbReference>
<dbReference type="InterPro" id="IPR040442">
    <property type="entry name" value="Pyrv_kinase-like_dom_sf"/>
</dbReference>
<dbReference type="NCBIfam" id="TIGR00222">
    <property type="entry name" value="panB"/>
    <property type="match status" value="1"/>
</dbReference>
<dbReference type="NCBIfam" id="NF001452">
    <property type="entry name" value="PRK00311.1"/>
    <property type="match status" value="1"/>
</dbReference>
<dbReference type="PANTHER" id="PTHR20881">
    <property type="entry name" value="3-METHYL-2-OXOBUTANOATE HYDROXYMETHYLTRANSFERASE"/>
    <property type="match status" value="1"/>
</dbReference>
<dbReference type="PANTHER" id="PTHR20881:SF0">
    <property type="entry name" value="3-METHYL-2-OXOBUTANOATE HYDROXYMETHYLTRANSFERASE"/>
    <property type="match status" value="1"/>
</dbReference>
<dbReference type="Pfam" id="PF02548">
    <property type="entry name" value="Pantoate_transf"/>
    <property type="match status" value="1"/>
</dbReference>
<dbReference type="PIRSF" id="PIRSF000388">
    <property type="entry name" value="Pantoate_hydroxy_MeTrfase"/>
    <property type="match status" value="1"/>
</dbReference>
<dbReference type="SUPFAM" id="SSF51621">
    <property type="entry name" value="Phosphoenolpyruvate/pyruvate domain"/>
    <property type="match status" value="1"/>
</dbReference>